<keyword id="KW-0007">Acetylation</keyword>
<keyword id="KW-0067">ATP-binding</keyword>
<keyword id="KW-0967">Endosome</keyword>
<keyword id="KW-0418">Kinase</keyword>
<keyword id="KW-0472">Membrane</keyword>
<keyword id="KW-0479">Metal-binding</keyword>
<keyword id="KW-0547">Nucleotide-binding</keyword>
<keyword id="KW-0597">Phosphoprotein</keyword>
<keyword id="KW-1185">Reference proteome</keyword>
<keyword id="KW-0808">Transferase</keyword>
<keyword id="KW-0926">Vacuole</keyword>
<keyword id="KW-0862">Zinc</keyword>
<keyword id="KW-0863">Zinc-finger</keyword>
<gene>
    <name evidence="15" type="primary">FAB1</name>
    <name evidence="16" type="synonym">SVL7</name>
    <name type="ordered locus">YFR019W</name>
</gene>
<organism>
    <name type="scientific">Saccharomyces cerevisiae (strain ATCC 204508 / S288c)</name>
    <name type="common">Baker's yeast</name>
    <dbReference type="NCBI Taxonomy" id="559292"/>
    <lineage>
        <taxon>Eukaryota</taxon>
        <taxon>Fungi</taxon>
        <taxon>Dikarya</taxon>
        <taxon>Ascomycota</taxon>
        <taxon>Saccharomycotina</taxon>
        <taxon>Saccharomycetes</taxon>
        <taxon>Saccharomycetales</taxon>
        <taxon>Saccharomycetaceae</taxon>
        <taxon>Saccharomyces</taxon>
    </lineage>
</organism>
<feature type="initiator methionine" description="Removed" evidence="21">
    <location>
        <position position="1"/>
    </location>
</feature>
<feature type="chain" id="PRO_0000185451" description="1-phosphatidylinositol 3-phosphate 5-kinase FAB1">
    <location>
        <begin position="2"/>
        <end position="2278"/>
    </location>
</feature>
<feature type="domain" description="PIPK" evidence="2">
    <location>
        <begin position="1932"/>
        <end position="2266"/>
    </location>
</feature>
<feature type="zinc finger region" description="FYVE-type" evidence="1">
    <location>
        <begin position="240"/>
        <end position="299"/>
    </location>
</feature>
<feature type="region of interest" description="Disordered" evidence="3">
    <location>
        <begin position="1"/>
        <end position="30"/>
    </location>
</feature>
<feature type="region of interest" description="Required for localization to the vacuole membrane">
    <location>
        <begin position="2"/>
        <end position="676"/>
    </location>
</feature>
<feature type="region of interest" description="Disordered" evidence="3">
    <location>
        <begin position="76"/>
        <end position="144"/>
    </location>
</feature>
<feature type="region of interest" description="Disordered" evidence="3">
    <location>
        <begin position="302"/>
        <end position="337"/>
    </location>
</feature>
<feature type="region of interest" description="Disordered" evidence="3">
    <location>
        <begin position="472"/>
        <end position="500"/>
    </location>
</feature>
<feature type="region of interest" description="Disordered" evidence="3">
    <location>
        <begin position="514"/>
        <end position="534"/>
    </location>
</feature>
<feature type="region of interest" description="Disordered" evidence="3">
    <location>
        <begin position="556"/>
        <end position="697"/>
    </location>
</feature>
<feature type="region of interest" description="Disordered" evidence="3">
    <location>
        <begin position="727"/>
        <end position="766"/>
    </location>
</feature>
<feature type="region of interest" description="CCT domain" evidence="8 9">
    <location>
        <begin position="766"/>
        <end position="1039"/>
    </location>
</feature>
<feature type="region of interest" description="CCR domain" evidence="8 10">
    <location>
        <begin position="1181"/>
        <end position="1500"/>
    </location>
</feature>
<feature type="region of interest" description="Disordered" evidence="3">
    <location>
        <begin position="1506"/>
        <end position="1627"/>
    </location>
</feature>
<feature type="region of interest" description="Disordered" evidence="3">
    <location>
        <begin position="1766"/>
        <end position="1804"/>
    </location>
</feature>
<feature type="region of interest" description="Disordered" evidence="3">
    <location>
        <begin position="1891"/>
        <end position="1972"/>
    </location>
</feature>
<feature type="compositionally biased region" description="Low complexity" evidence="3">
    <location>
        <begin position="18"/>
        <end position="28"/>
    </location>
</feature>
<feature type="compositionally biased region" description="Low complexity" evidence="3">
    <location>
        <begin position="76"/>
        <end position="89"/>
    </location>
</feature>
<feature type="compositionally biased region" description="Polar residues" evidence="3">
    <location>
        <begin position="90"/>
        <end position="128"/>
    </location>
</feature>
<feature type="compositionally biased region" description="Low complexity" evidence="3">
    <location>
        <begin position="472"/>
        <end position="498"/>
    </location>
</feature>
<feature type="compositionally biased region" description="Polar residues" evidence="3">
    <location>
        <begin position="557"/>
        <end position="570"/>
    </location>
</feature>
<feature type="compositionally biased region" description="Low complexity" evidence="3">
    <location>
        <begin position="571"/>
        <end position="601"/>
    </location>
</feature>
<feature type="compositionally biased region" description="Polar residues" evidence="3">
    <location>
        <begin position="602"/>
        <end position="611"/>
    </location>
</feature>
<feature type="compositionally biased region" description="Acidic residues" evidence="3">
    <location>
        <begin position="634"/>
        <end position="644"/>
    </location>
</feature>
<feature type="compositionally biased region" description="Polar residues" evidence="3">
    <location>
        <begin position="665"/>
        <end position="679"/>
    </location>
</feature>
<feature type="compositionally biased region" description="Basic residues" evidence="3">
    <location>
        <begin position="682"/>
        <end position="692"/>
    </location>
</feature>
<feature type="compositionally biased region" description="Polar residues" evidence="3">
    <location>
        <begin position="729"/>
        <end position="741"/>
    </location>
</feature>
<feature type="compositionally biased region" description="Low complexity" evidence="3">
    <location>
        <begin position="749"/>
        <end position="763"/>
    </location>
</feature>
<feature type="compositionally biased region" description="Basic and acidic residues" evidence="3">
    <location>
        <begin position="1506"/>
        <end position="1554"/>
    </location>
</feature>
<feature type="compositionally biased region" description="Polar residues" evidence="3">
    <location>
        <begin position="1555"/>
        <end position="1564"/>
    </location>
</feature>
<feature type="compositionally biased region" description="Low complexity" evidence="3">
    <location>
        <begin position="1580"/>
        <end position="1595"/>
    </location>
</feature>
<feature type="compositionally biased region" description="Polar residues" evidence="3">
    <location>
        <begin position="1766"/>
        <end position="1776"/>
    </location>
</feature>
<feature type="compositionally biased region" description="Basic and acidic residues" evidence="3">
    <location>
        <begin position="1780"/>
        <end position="1799"/>
    </location>
</feature>
<feature type="compositionally biased region" description="Polar residues" evidence="3">
    <location>
        <begin position="1918"/>
        <end position="1932"/>
    </location>
</feature>
<feature type="binding site" evidence="1">
    <location>
        <position position="246"/>
    </location>
    <ligand>
        <name>Zn(2+)</name>
        <dbReference type="ChEBI" id="CHEBI:29105"/>
        <label>1</label>
    </ligand>
</feature>
<feature type="binding site" evidence="1">
    <location>
        <position position="249"/>
    </location>
    <ligand>
        <name>Zn(2+)</name>
        <dbReference type="ChEBI" id="CHEBI:29105"/>
        <label>1</label>
    </ligand>
</feature>
<feature type="binding site" evidence="1">
    <location>
        <position position="262"/>
    </location>
    <ligand>
        <name>Zn(2+)</name>
        <dbReference type="ChEBI" id="CHEBI:29105"/>
        <label>2</label>
    </ligand>
</feature>
<feature type="binding site" evidence="1">
    <location>
        <position position="265"/>
    </location>
    <ligand>
        <name>Zn(2+)</name>
        <dbReference type="ChEBI" id="CHEBI:29105"/>
        <label>2</label>
    </ligand>
</feature>
<feature type="binding site" evidence="1">
    <location>
        <position position="270"/>
    </location>
    <ligand>
        <name>Zn(2+)</name>
        <dbReference type="ChEBI" id="CHEBI:29105"/>
        <label>1</label>
    </ligand>
</feature>
<feature type="binding site" evidence="1">
    <location>
        <position position="273"/>
    </location>
    <ligand>
        <name>Zn(2+)</name>
        <dbReference type="ChEBI" id="CHEBI:29105"/>
        <label>1</label>
    </ligand>
</feature>
<feature type="binding site" evidence="1">
    <location>
        <position position="291"/>
    </location>
    <ligand>
        <name>Zn(2+)</name>
        <dbReference type="ChEBI" id="CHEBI:29105"/>
        <label>2</label>
    </ligand>
</feature>
<feature type="binding site" evidence="1">
    <location>
        <position position="294"/>
    </location>
    <ligand>
        <name>Zn(2+)</name>
        <dbReference type="ChEBI" id="CHEBI:29105"/>
        <label>2</label>
    </ligand>
</feature>
<feature type="modified residue" description="N-acetylserine" evidence="21">
    <location>
        <position position="2"/>
    </location>
</feature>
<feature type="modified residue" description="Phosphoserine" evidence="20">
    <location>
        <position position="186"/>
    </location>
</feature>
<feature type="modified residue" description="Phosphoserine" evidence="20">
    <location>
        <position position="1627"/>
    </location>
</feature>
<feature type="modified residue" description="Phosphoserine" evidence="20">
    <location>
        <position position="1630"/>
    </location>
</feature>
<feature type="modified residue" description="Phosphoserine" evidence="20">
    <location>
        <position position="1938"/>
    </location>
</feature>
<feature type="modified residue" description="Phosphothreonine" evidence="19">
    <location>
        <position position="1953"/>
    </location>
</feature>
<feature type="mutagenesis site" description="Cells show growth at 38 degrees Celsius. Failure to localize to the vacuole membrane." evidence="8">
    <original>C</original>
    <variation>S</variation>
    <location>
        <position position="262"/>
    </location>
</feature>
<feature type="mutagenesis site" description="Loss of interaction with VAC14. Failure to localize to the vacuole membrane." evidence="9">
    <original>G</original>
    <variation>E</variation>
    <location>
        <position position="864"/>
    </location>
</feature>
<feature type="mutagenesis site" description="Cells are defective for growth at 38 degrees Celsius." evidence="8">
    <original>T</original>
    <variation>I</variation>
    <location>
        <position position="1017"/>
    </location>
</feature>
<feature type="mutagenesis site" description="Cells are defective for growth at 38 degrees Celsius and show single-lobed, enlarged vacuoles." evidence="8">
    <original>C</original>
    <variation>A</variation>
    <location>
        <position position="1243"/>
    </location>
</feature>
<feature type="mutagenesis site" description="Impairs intramolecular interaction with the kinase domain. Leads to elevated PI(3,5)P2 levels." evidence="10">
    <original>Q</original>
    <variation>R</variation>
    <location>
        <position position="1419"/>
    </location>
</feature>
<feature type="mutagenesis site" description="Impairs intramolecular interaction with the kinase domain. Leads to elevated PI(3,5)P2 levels." evidence="10">
    <original>D</original>
    <variation>N</variation>
    <location>
        <position position="1486"/>
    </location>
</feature>
<feature type="mutagenesis site" description="Impairs intramolecular interaction with the kinase domain. Leads to elevated PI(3,5)P2 levels." evidence="10">
    <original>T</original>
    <variation>A</variation>
    <location>
        <position position="1491"/>
    </location>
</feature>
<feature type="mutagenesis site" description="Cells are defective for growth at 38 degrees Celsius. PtdIns(3,5)P2 levels are severely reduced." evidence="8">
    <original>D</original>
    <variation>R</variation>
    <location>
        <position position="2134"/>
    </location>
</feature>
<feature type="mutagenesis site" description="Impairs intramolecular interaction with the CCR domain, leading to a hyperactive kinase mutant; elevates PI(3,5)P2 levels." evidence="10 11">
    <original>T</original>
    <variation>A</variation>
    <location>
        <position position="2250"/>
    </location>
</feature>
<feature type="mutagenesis site" description="Impairs intramolecular interaction with the CCR domain, leading to a hyperactive kinase mutant." evidence="10">
    <original>Q</original>
    <variation>R</variation>
    <location>
        <position position="2253"/>
    </location>
</feature>
<feature type="mutagenesis site" description="Impairs intramolecular interaction with the CCR domain, leading to a hyperactive kinase mutant." evidence="10">
    <original>R</original>
    <variation>A</variation>
    <location>
        <position position="2264"/>
    </location>
</feature>
<feature type="sequence conflict" description="In Ref. 2; BAA09258." evidence="17" ref="2">
    <original>R</original>
    <variation>W</variation>
    <location>
        <position position="2275"/>
    </location>
</feature>
<evidence type="ECO:0000255" key="1">
    <source>
        <dbReference type="PROSITE-ProRule" id="PRU00091"/>
    </source>
</evidence>
<evidence type="ECO:0000255" key="2">
    <source>
        <dbReference type="PROSITE-ProRule" id="PRU00781"/>
    </source>
</evidence>
<evidence type="ECO:0000256" key="3">
    <source>
        <dbReference type="SAM" id="MobiDB-lite"/>
    </source>
</evidence>
<evidence type="ECO:0000269" key="4">
    <source>
    </source>
</evidence>
<evidence type="ECO:0000269" key="5">
    <source>
    </source>
</evidence>
<evidence type="ECO:0000269" key="6">
    <source>
    </source>
</evidence>
<evidence type="ECO:0000269" key="7">
    <source>
    </source>
</evidence>
<evidence type="ECO:0000269" key="8">
    <source>
    </source>
</evidence>
<evidence type="ECO:0000269" key="9">
    <source>
    </source>
</evidence>
<evidence type="ECO:0000269" key="10">
    <source>
    </source>
</evidence>
<evidence type="ECO:0000269" key="11">
    <source>
    </source>
</evidence>
<evidence type="ECO:0000269" key="12">
    <source>
    </source>
</evidence>
<evidence type="ECO:0000269" key="13">
    <source>
    </source>
</evidence>
<evidence type="ECO:0000269" key="14">
    <source>
    </source>
</evidence>
<evidence type="ECO:0000303" key="15">
    <source>
    </source>
</evidence>
<evidence type="ECO:0000303" key="16">
    <source>
    </source>
</evidence>
<evidence type="ECO:0000305" key="17"/>
<evidence type="ECO:0000305" key="18">
    <source>
    </source>
</evidence>
<evidence type="ECO:0007744" key="19">
    <source>
    </source>
</evidence>
<evidence type="ECO:0007744" key="20">
    <source>
    </source>
</evidence>
<evidence type="ECO:0007744" key="21">
    <source>
    </source>
</evidence>
<comment type="function">
    <text evidence="7 11 12 13 14">The PI(3,5)P2 regulatory complex regulates both the synthesis and turnover of phosphatidylinositol 3,5-bisphosphate (PtdIns(3,5)P2). Catalyzes the phosphorylation of phosphatidylinositol 3-phosphate on the fifth hydroxyl of the myo-inositol ring, to form phosphatidylinositol 3,5-bisphosphate (PubMed:16492811, PubMed:9811604). Required for endocytic-vacuolar pathway and nuclear migration (PubMed:16492811, PubMed:9751732, PubMed:9811604). The product of the reaction, PI(3,5)P2 is an important regulator of vacuole homeostasis perhaps by controlling membrane flux to and/or from the vacuole (PubMed:9763421, PubMed:9811604). PI(3,5)P2 regulates the transition between trans-SNARE complex formation and vacuole membrane fusion (PubMed:30427760). Hyperosmotic shock-induced increase in the levels of PtdIns(3,5)P2 requires the presence of VAC7, VAC14, and/or FIG4 (PubMed:16492811).</text>
</comment>
<comment type="catalytic activity">
    <reaction evidence="14">
        <text>a 1,2-diacyl-sn-glycero-3-phospho-(1D-myo-inositol-3-phosphate) + ATP = a 1,2-diacyl-sn-glycero-3-phospho-(1D-myo-inositol-3,5-bisphosphate) + ADP + H(+)</text>
        <dbReference type="Rhea" id="RHEA:13609"/>
        <dbReference type="ChEBI" id="CHEBI:15378"/>
        <dbReference type="ChEBI" id="CHEBI:30616"/>
        <dbReference type="ChEBI" id="CHEBI:57923"/>
        <dbReference type="ChEBI" id="CHEBI:58088"/>
        <dbReference type="ChEBI" id="CHEBI:456216"/>
        <dbReference type="EC" id="2.7.1.150"/>
    </reaction>
</comment>
<comment type="catalytic activity">
    <reaction evidence="14">
        <text>1,2-dihexadecanoyl-sn-glycero-3-phospho-(1D-myo-inositol-3-phosphate) + ATP = 1,2-dihexadecanoyl-sn-glycero-3-phospho-(1D-myo-inositol-3,5-phosphate) + ADP + H(+)</text>
        <dbReference type="Rhea" id="RHEA:42348"/>
        <dbReference type="ChEBI" id="CHEBI:15378"/>
        <dbReference type="ChEBI" id="CHEBI:30616"/>
        <dbReference type="ChEBI" id="CHEBI:78994"/>
        <dbReference type="ChEBI" id="CHEBI:78995"/>
        <dbReference type="ChEBI" id="CHEBI:456216"/>
    </reaction>
    <physiologicalReaction direction="left-to-right" evidence="18">
        <dbReference type="Rhea" id="RHEA:42349"/>
    </physiologicalReaction>
</comment>
<comment type="cofactor">
    <cofactor>
        <name>Mg(2+)</name>
        <dbReference type="ChEBI" id="CHEBI:18420"/>
    </cofactor>
    <cofactor>
        <name>Mn(2+)</name>
        <dbReference type="ChEBI" id="CHEBI:29035"/>
    </cofactor>
</comment>
<comment type="activity regulation">
    <text evidence="4 5">Activated by VAC14 and VAC7. VAC14 acts as a specific osmotic response regulator.</text>
</comment>
<comment type="subunit">
    <text evidence="8 9">Component of the PI(3,5)P2 regulatory complex, composed of ATG18, FIG4, FAB1, VAC14 and VAC7. VAC14 nucleates the assembly of the complex and serves as a scaffold.</text>
</comment>
<comment type="interaction">
    <interactant intactId="EBI-6754">
        <id>P34756</id>
    </interactant>
    <interactant intactId="EBI-28407">
        <id>P42837</id>
        <label>FIG4</label>
    </interactant>
    <organismsDiffer>false</organismsDiffer>
    <experiments>4</experiments>
</comment>
<comment type="interaction">
    <interactant intactId="EBI-6754">
        <id>P34756</id>
    </interactant>
    <interactant intactId="EBI-27189">
        <id>Q06708</id>
        <label>VAC14</label>
    </interactant>
    <organismsDiffer>false</organismsDiffer>
    <experiments>10</experiments>
</comment>
<comment type="subcellular location">
    <subcellularLocation>
        <location evidence="4 8 9 13">Vacuole membrane</location>
        <topology evidence="8 9">Peripheral membrane protein</topology>
    </subcellularLocation>
    <subcellularLocation>
        <location evidence="4 13">Endosome membrane</location>
        <topology evidence="4 13">Peripheral membrane protein</topology>
    </subcellularLocation>
    <text evidence="8 9">Localization to the vacuole membrane requires VAC14 and FIG4.</text>
</comment>
<comment type="domain">
    <text evidence="8 9">The chaperone-containing TCP1 (CCT) domain is essential for the interaction with the scaffold protein VAC14.</text>
</comment>
<comment type="domain">
    <text evidence="8 10">The conserved cysteine-rich (CCR) domain contacts intramolecularly the C-terminus, including the kinase domain, and this interaction negatively regulates PI(3) 5-kinase activity.</text>
</comment>
<comment type="miscellaneous">
    <text evidence="6">Present with 149 molecules/cell in log phase SD medium.</text>
</comment>
<proteinExistence type="evidence at protein level"/>
<reference key="1">
    <citation type="journal article" date="1995" name="Mol. Biol. Cell">
        <title>Novel PI(4)P 5-kinase homologue, Fab1p, essential for normal vacuole function and morphology in yeast.</title>
        <authorList>
            <person name="Yamamoto A."/>
            <person name="Dewald D.B."/>
            <person name="Boronenkov I.V."/>
            <person name="Anderson R.A."/>
            <person name="Emr S.D."/>
            <person name="Koshland D."/>
        </authorList>
    </citation>
    <scope>NUCLEOTIDE SEQUENCE [GENOMIC DNA]</scope>
</reference>
<reference key="2">
    <citation type="journal article" date="1995" name="Nat. Genet.">
        <title>Analysis of the nucleotide sequence of chromosome VI from Saccharomyces cerevisiae.</title>
        <authorList>
            <person name="Murakami Y."/>
            <person name="Naitou M."/>
            <person name="Hagiwara H."/>
            <person name="Shibata T."/>
            <person name="Ozawa M."/>
            <person name="Sasanuma S."/>
            <person name="Sasanuma M."/>
            <person name="Tsuchiya Y."/>
            <person name="Soeda E."/>
            <person name="Yokoyama K."/>
            <person name="Yamazaki M."/>
            <person name="Tashiro H."/>
            <person name="Eki T."/>
        </authorList>
    </citation>
    <scope>NUCLEOTIDE SEQUENCE [LARGE SCALE GENOMIC DNA]</scope>
    <source>
        <strain>ATCC 204508 / S288c</strain>
    </source>
</reference>
<reference key="3">
    <citation type="journal article" date="2014" name="G3 (Bethesda)">
        <title>The reference genome sequence of Saccharomyces cerevisiae: Then and now.</title>
        <authorList>
            <person name="Engel S.R."/>
            <person name="Dietrich F.S."/>
            <person name="Fisk D.G."/>
            <person name="Binkley G."/>
            <person name="Balakrishnan R."/>
            <person name="Costanzo M.C."/>
            <person name="Dwight S.S."/>
            <person name="Hitz B.C."/>
            <person name="Karra K."/>
            <person name="Nash R.S."/>
            <person name="Weng S."/>
            <person name="Wong E.D."/>
            <person name="Lloyd P."/>
            <person name="Skrzypek M.S."/>
            <person name="Miyasato S.R."/>
            <person name="Simison M."/>
            <person name="Cherry J.M."/>
        </authorList>
    </citation>
    <scope>GENOME REANNOTATION</scope>
    <scope>SEQUENCE REVISION TO 2275</scope>
    <source>
        <strain>ATCC 204508 / S288c</strain>
    </source>
</reference>
<reference key="4">
    <citation type="journal article" date="1998" name="Curr. Biol.">
        <title>The stress-activated phosphatidylinositol 3-phosphate 5-kinase Fab1p is essential for vacuole function in S. cerevisiae.</title>
        <authorList>
            <person name="Cooke F.T."/>
            <person name="Dove S.K."/>
            <person name="McEwen R.K."/>
            <person name="Painter G."/>
            <person name="Holmes A.B."/>
            <person name="Hall M.N."/>
            <person name="Michell R.H."/>
            <person name="Parker P.J."/>
        </authorList>
    </citation>
    <scope>FUNCTION</scope>
    <scope>CATALYTIC ACTIVITY</scope>
</reference>
<reference key="5">
    <citation type="journal article" date="1998" name="J. Cell Biol.">
        <title>Fab1p is essential for PtdIns(3)P 5-kinase activity and the maintenance of vacuolar size and membrane homeostasis.</title>
        <authorList>
            <person name="Gary J.D."/>
            <person name="Wurmser A.E."/>
            <person name="Bonangelino C.J."/>
            <person name="Weisman L.S."/>
            <person name="Emr S.D."/>
        </authorList>
    </citation>
    <scope>FUNCTION</scope>
    <scope>SUBCELLULAR LOCATION</scope>
</reference>
<reference key="6">
    <citation type="journal article" date="1998" name="Proc. Natl. Acad. Sci. U.S.A.">
        <title>Isolation of yeast mutants defective for localization of vacuolar vital dyes.</title>
        <authorList>
            <person name="Zheng B."/>
            <person name="Wu J.N."/>
            <person name="Schober W."/>
            <person name="Lewis D.E."/>
            <person name="Vida T."/>
        </authorList>
    </citation>
    <scope>FUNCTION</scope>
</reference>
<reference key="7">
    <citation type="journal article" date="2002" name="J. Cell Biol.">
        <title>Osmotic stress-induced increase of phosphatidylinositol 3,5-bisphosphate requires Vac14p, an activator of the lipid kinase Fab1p.</title>
        <authorList>
            <person name="Bonangelino C.J."/>
            <person name="Nau J.J."/>
            <person name="Duex J.E."/>
            <person name="Brinkman M."/>
            <person name="Wurmser A.E."/>
            <person name="Gary J.D."/>
            <person name="Emr S.D."/>
            <person name="Weisman L.S."/>
        </authorList>
    </citation>
    <scope>ACTIVITY REGULATION</scope>
    <scope>SUBCELLULAR LOCATION</scope>
</reference>
<reference key="8">
    <citation type="journal article" date="2002" name="Mol. Biol. Cell">
        <title>Regulation of Fab1 phosphatidylinositol 3-phosphate 5-kinase pathway by Vac7 protein and Fig4, a polyphosphoinositide phosphatase family member.</title>
        <authorList>
            <person name="Gary J.D."/>
            <person name="Sato T.K."/>
            <person name="Stefan C.J."/>
            <person name="Bonangelino C.J."/>
            <person name="Weisman L.S."/>
            <person name="Emr S.D."/>
        </authorList>
    </citation>
    <scope>ACTIVITY REGULATION</scope>
</reference>
<reference key="9">
    <citation type="journal article" date="2003" name="Nature">
        <title>Global analysis of protein localization in budding yeast.</title>
        <authorList>
            <person name="Huh W.-K."/>
            <person name="Falvo J.V."/>
            <person name="Gerke L.C."/>
            <person name="Carroll A.S."/>
            <person name="Howson R.W."/>
            <person name="Weissman J.S."/>
            <person name="O'Shea E.K."/>
        </authorList>
    </citation>
    <scope>SUBCELLULAR LOCATION [LARGE SCALE ANALYSIS]</scope>
</reference>
<reference key="10">
    <citation type="journal article" date="2003" name="Nature">
        <title>Global analysis of protein expression in yeast.</title>
        <authorList>
            <person name="Ghaemmaghami S."/>
            <person name="Huh W.-K."/>
            <person name="Bower K."/>
            <person name="Howson R.W."/>
            <person name="Belle A."/>
            <person name="Dephoure N."/>
            <person name="O'Shea E.K."/>
            <person name="Weissman J.S."/>
        </authorList>
    </citation>
    <scope>LEVEL OF PROTEIN EXPRESSION [LARGE SCALE ANALYSIS]</scope>
</reference>
<reference key="11">
    <citation type="journal article" date="2006" name="J. Cell Biol.">
        <title>The Vac14p-Fig4p complex acts independently of Vac7p and couples PI3,5P2 synthesis and turnover.</title>
        <authorList>
            <person name="Duex J.E."/>
            <person name="Tang F."/>
            <person name="Weisman L.S."/>
        </authorList>
    </citation>
    <scope>FUNCTION</scope>
</reference>
<reference key="12">
    <citation type="journal article" date="2008" name="EMBO J.">
        <title>VAC14 nucleates a protein complex essential for the acute interconversion of PI3P and PI(3,5)P(2) in yeast and mouse.</title>
        <authorList>
            <person name="Jin N."/>
            <person name="Chow C.Y."/>
            <person name="Liu L."/>
            <person name="Zolov S.N."/>
            <person name="Bronson R."/>
            <person name="Davisson M."/>
            <person name="Petersen J.L."/>
            <person name="Zhang Y."/>
            <person name="Park S."/>
            <person name="Duex J.E."/>
            <person name="Goldowitz D."/>
            <person name="Meisler M.H."/>
            <person name="Weisman L.S."/>
        </authorList>
    </citation>
    <scope>IDENTIFICATION IN THE PI(3,5)P2 REGULATORY COMPLEX</scope>
    <scope>SUBCELLULAR LOCATION</scope>
    <scope>MUTAGENESIS OF GLY-864</scope>
    <scope>DOMAIN</scope>
</reference>
<reference key="13">
    <citation type="journal article" date="2008" name="Mol. Biol. Cell">
        <title>Assembly of a Fab1 phosphoinositide kinase signaling complex requires the Fig4 phosphoinositide phosphatase.</title>
        <authorList>
            <person name="Botelho R.J."/>
            <person name="Efe J.A."/>
            <person name="Teis D."/>
            <person name="Emr S.D."/>
        </authorList>
    </citation>
    <scope>IDENTIFICATION IN THE PI(3,5)P2 REGULATORY COMPLEX</scope>
    <scope>SUBCELLULAR LOCATION</scope>
    <scope>MUTAGENESIS OF CYS-262; THR-1017; CYS-1243 AND ASP-2134</scope>
    <scope>DOMAIN</scope>
</reference>
<reference key="14">
    <citation type="journal article" date="2008" name="Mol. Cell. Proteomics">
        <title>A multidimensional chromatography technology for in-depth phosphoproteome analysis.</title>
        <authorList>
            <person name="Albuquerque C.P."/>
            <person name="Smolka M.B."/>
            <person name="Payne S.H."/>
            <person name="Bafna V."/>
            <person name="Eng J."/>
            <person name="Zhou H."/>
        </authorList>
    </citation>
    <scope>PHOSPHORYLATION [LARGE SCALE ANALYSIS] AT THR-1953</scope>
    <scope>IDENTIFICATION BY MASS SPECTROMETRY [LARGE SCALE ANALYSIS]</scope>
</reference>
<reference key="15">
    <citation type="journal article" date="2009" name="Science">
        <title>Global analysis of Cdk1 substrate phosphorylation sites provides insights into evolution.</title>
        <authorList>
            <person name="Holt L.J."/>
            <person name="Tuch B.B."/>
            <person name="Villen J."/>
            <person name="Johnson A.D."/>
            <person name="Gygi S.P."/>
            <person name="Morgan D.O."/>
        </authorList>
    </citation>
    <scope>PHOSPHORYLATION [LARGE SCALE ANALYSIS] AT SER-186; SER-1627; SER-1630 AND SER-1938</scope>
    <scope>IDENTIFICATION BY MASS SPECTROMETRY [LARGE SCALE ANALYSIS]</scope>
</reference>
<reference key="16">
    <citation type="journal article" date="2012" name="Proc. Natl. Acad. Sci. U.S.A.">
        <title>N-terminal acetylome analyses and functional insights of the N-terminal acetyltransferase NatB.</title>
        <authorList>
            <person name="Van Damme P."/>
            <person name="Lasa M."/>
            <person name="Polevoda B."/>
            <person name="Gazquez C."/>
            <person name="Elosegui-Artola A."/>
            <person name="Kim D.S."/>
            <person name="De Juan-Pardo E."/>
            <person name="Demeyer K."/>
            <person name="Hole K."/>
            <person name="Larrea E."/>
            <person name="Timmerman E."/>
            <person name="Prieto J."/>
            <person name="Arnesen T."/>
            <person name="Sherman F."/>
            <person name="Gevaert K."/>
            <person name="Aldabe R."/>
        </authorList>
    </citation>
    <scope>ACETYLATION [LARGE SCALE ANALYSIS] AT SER-2</scope>
    <scope>CLEAVAGE OF INITIATOR METHIONINE [LARGE SCALE ANALYSIS]</scope>
    <scope>IDENTIFICATION BY MASS SPECTROMETRY [LARGE SCALE ANALYSIS]</scope>
</reference>
<reference key="17">
    <citation type="journal article" date="2017" name="Mol. Biol. Cell">
        <title>An intramolecular interaction within the lipid kinase Fab1 regulates cellular phosphatidylinositol 3,5-bisphosphate lipid levels.</title>
        <authorList>
            <person name="Lang M.J."/>
            <person name="Strunk B.S."/>
            <person name="Azad N."/>
            <person name="Petersen J.L."/>
            <person name="Weisman L.S."/>
        </authorList>
    </citation>
    <scope>DOMAIN</scope>
    <scope>MUTAGENESIS OF GLN-1419; ASP-1486; THR-1491; THR-2250; GLN-2253 AND ARG-2264</scope>
</reference>
<reference key="18">
    <citation type="journal article" date="2019" name="Mol. Biol. Cell">
        <title>Phosphatidylinositol 3,5-bisphosphate regulates the transition between trans-SNARE complex formation and vacuole membrane fusion.</title>
        <authorList>
            <person name="Miner G.E."/>
            <person name="Sullivan K.D."/>
            <person name="Guo A."/>
            <person name="Jones B.C."/>
            <person name="Hurst L.R."/>
            <person name="Ellis E.C."/>
            <person name="Starr M.L."/>
            <person name="Fratti R.A."/>
        </authorList>
    </citation>
    <scope>FUNCTION</scope>
    <scope>MUTAGENESIS OF THR-2250</scope>
</reference>
<name>FAB1_YEAST</name>
<sequence>MSSEEPHASISFPDGSHVRSSSTGTSSVNTIDATLSRPNYIKKPSLHIMSTSTTSTTTDLVTNPILSNISVPKISPPTSSSIATATSTSHVTGTASHSNIKANANTSTSVNKKNLPPTTSGRIPSSTIKRYPSRYKPSHSLQLPIKNDSNFKRSSIYASKSTVTAIPIRNNRPISMQNSYARTPDSDHDDVGDEVSSIKSASSSLTASLSKSFLFAFYNNRKKDKTSNNGVLSKEYWMKDESSKECFSCGKTFNTFRRKHHCRICGQIFCSSCTLLIDGDRFGCHAKMRVCYNCYEHADTYEDSSDEENDSTMQLNEPRSRSRSRSSNTNPYSHSHSHLHLISQDNHNGTDLHDPVAATDNPQQQNEVYLLNDDDVQSIMTSGEDSKLFISTPPPPPKMAIPATKQGGSLEISFDSENDRALHYQDDNPGRHHHLDSVPTRYTIRDMDNISHYDTNSNSTLRPHYNTNNSTITINNLNNTTSNNSNYNNTNSNSNINNPAHSLRRSIFHYVSSNSVNKDSNNSSATPASSAQSSSILDPANRIIGNYAHRNYKFKFNYNSKGPSQQNDTANGNNDNNNNNNNNNNNNNNNSASGIADNNNIPSNDNGTTFTLDKKKRNPLTKSKSTSAYLEYPLNEEDSSEDEGSMSIYSVLNDDHKTDNPIRSMRNSTKSFQRAQASLQRMRFRRKSKSKHFPNNSKSSIYRDLNFLTNSTPNLLSVVSDDNLYDDSSPLQDKASSSAASRLTDRKFSNSSGSNNNSNSNSNINTDPWKRIASISGFKLKKEKKRELNEVSLLHMHALLKQLLNDQEISNLQEWITLLDGALRKVLRTILNARDLNTLDFRQTYVKIKRISGGSPQNSEYIDGVVFSKALPSKTMPRHLKNPRILLIMFPLEYQKNNNHFLSIESVFRQEREYLDKLVSRLKSLHPDIIYVGANVSGYALELLNDSGIVVQFNMKPQVIERIAKLTEADIAISVDKLATNIKMGECETFEVKSYIYGNISKTYTFLRGCNPELGGTILLRGDSLENLRKIKQVSEFMVYAIFSLKLESSFFNDNFIQLSTDVYLKRAESKKLQVFEGYFADFLIKFNNRILTVSPTVDFPIPFLLEKARGLEKKLIERINQYESESDLDRQTQLNMLQGLESTITKKHLGNLIKFLHEMEIENLELEFQKRSRQWEVSYSSSQNLLGTGSHQSITVLYSMVSTKTATPCVGPQIVTIDYFWDSDISIGQFIENVVGTARYPCQQGCNGLYLDHYRSYVHGSGKVDVLIEKFQTRLPKLKDIILTWSYCKKCGTSTPILQISEKTWNHSFGKYLEVMFWSYKDSVTGIGKCPHDFTKDHVKYFGYNDLVVRLEYSDLEVHELITPPRKIKWKPHIDIKLKVELYYKILEKINNFYGSVLSRLERIKLDSMTKDKVLSGQAKIIELKSNATEEQKLMLQDLDTFYADSPCDQHLPLNLVIKSLYDKAVNWNSTFAIFAKSYLPSETDISRITAKQLKKLFYDSSRKDSEDKKSLHDEKAKTRKPEKNELPLEGLKDVEKPKIDSKNTTENRDRTNEPQNAVTITTFKDDTPIIPTSGTSHLTVTPSASSVSSSLTPQTEERPPISRSGTGISMTHDKSTRPNIRKMSSDSSLCGLASLANEYSKNNKVSKLATFFDQMHFDALSKEFELERERERLQLNKDKYQAIRLQTSTPIVEIYKNVKDAVDEPLHSRSSGNNLSSANVKTLEAPVGEHSRANNCNPPNLDQNLETELENSISQWGENILNPSGKTTASTHLNSKPVVKETSENPKSIVRESDNSKSEPLPPVITTTTVNKVESTPQPEKSLLMKTLSNFWADRSAYLWKPLVYPTCPSEHIFTDSDVIIREDEPSSLIAFCLSTSDYRNKMMNLNVQQQQQQQTAEAAPAKTGGNSGGTTQTGDPSVNISPSVSTTSHNKGRDSEISSLVTTKEGLLNTPPIEGARDRTPQESQTHSQANLDTLQELEKIMTKKTATHLRYQFEEGLTVMSCKIFFTEHFDVFRKICDCQENFIQSLSRCVKWDSNGGKSGSGFLKTLDDRFIIKELSHAELEAFIKFAPSYFEYMAQAMFHDLPTTLAKVFGFYQIQVKSSISSSKSYKMDVIIMENLFYEKKTTRIFDLKGSMRNRHVEQTGKANEVLLDENMVEYIYESPIHVREYDKKLLRASVWNDTLFLAKMNVMDYSLVIGIDNEGYTLTVGIIDFIRTFTWDKKLESWVKEKGLVGGASVIKQPTVVTPRQYKKRFREAMERYILMVPDPWYREGN</sequence>
<dbReference type="EC" id="2.7.1.150"/>
<dbReference type="EMBL" id="U01017">
    <property type="protein sequence ID" value="AAA81360.1"/>
    <property type="molecule type" value="Genomic_DNA"/>
</dbReference>
<dbReference type="EMBL" id="D50617">
    <property type="protein sequence ID" value="BAA09258.1"/>
    <property type="molecule type" value="Genomic_DNA"/>
</dbReference>
<dbReference type="EMBL" id="BK006940">
    <property type="protein sequence ID" value="DAA12460.2"/>
    <property type="molecule type" value="Genomic_DNA"/>
</dbReference>
<dbReference type="PIR" id="S56274">
    <property type="entry name" value="S56274"/>
</dbReference>
<dbReference type="RefSeq" id="NP_116674.2">
    <property type="nucleotide sequence ID" value="NM_001179984.2"/>
</dbReference>
<dbReference type="SMR" id="P34756"/>
<dbReference type="BioGRID" id="31172">
    <property type="interactions" value="397"/>
</dbReference>
<dbReference type="ComplexPortal" id="CPX-3088">
    <property type="entry name" value="PAS complex"/>
</dbReference>
<dbReference type="DIP" id="DIP-6784N"/>
<dbReference type="FunCoup" id="P34756">
    <property type="interactions" value="993"/>
</dbReference>
<dbReference type="IntAct" id="P34756">
    <property type="interactions" value="9"/>
</dbReference>
<dbReference type="MINT" id="P34756"/>
<dbReference type="STRING" id="4932.YFR019W"/>
<dbReference type="SwissLipids" id="SLP:000000854"/>
<dbReference type="CarbonylDB" id="P34756"/>
<dbReference type="GlyGen" id="P34756">
    <property type="glycosylation" value="6 sites, 1 O-linked glycan (5 sites)"/>
</dbReference>
<dbReference type="iPTMnet" id="P34756"/>
<dbReference type="PaxDb" id="4932-YFR019W"/>
<dbReference type="PeptideAtlas" id="P34756"/>
<dbReference type="EnsemblFungi" id="YFR019W_mRNA">
    <property type="protein sequence ID" value="YFR019W"/>
    <property type="gene ID" value="YFR019W"/>
</dbReference>
<dbReference type="GeneID" id="850574"/>
<dbReference type="KEGG" id="sce:YFR019W"/>
<dbReference type="AGR" id="SGD:S000001915"/>
<dbReference type="SGD" id="S000001915">
    <property type="gene designation" value="FAB1"/>
</dbReference>
<dbReference type="VEuPathDB" id="FungiDB:YFR019W"/>
<dbReference type="eggNOG" id="KOG0230">
    <property type="taxonomic scope" value="Eukaryota"/>
</dbReference>
<dbReference type="GeneTree" id="ENSGT00940000156307"/>
<dbReference type="HOGENOM" id="CLU_000480_3_1_1"/>
<dbReference type="InParanoid" id="P34756"/>
<dbReference type="OMA" id="LEVPDIW"/>
<dbReference type="OrthoDB" id="158357at2759"/>
<dbReference type="BioCyc" id="MetaCyc:YFR019W-MONOMER"/>
<dbReference type="BioCyc" id="YEAST:YFR019W-MONOMER"/>
<dbReference type="BRENDA" id="2.7.1.150">
    <property type="organism ID" value="984"/>
</dbReference>
<dbReference type="BioGRID-ORCS" id="850574">
    <property type="hits" value="0 hits in 10 CRISPR screens"/>
</dbReference>
<dbReference type="CD-CODE" id="E03F929F">
    <property type="entry name" value="Stress granule"/>
</dbReference>
<dbReference type="ChiTaRS" id="FAB1">
    <property type="organism name" value="yeast"/>
</dbReference>
<dbReference type="PRO" id="PR:P34756"/>
<dbReference type="Proteomes" id="UP000002311">
    <property type="component" value="Chromosome VI"/>
</dbReference>
<dbReference type="RNAct" id="P34756">
    <property type="molecule type" value="protein"/>
</dbReference>
<dbReference type="GO" id="GO:0010008">
    <property type="term" value="C:endosome membrane"/>
    <property type="evidence" value="ECO:0000314"/>
    <property type="project" value="SGD"/>
</dbReference>
<dbReference type="GO" id="GO:0000329">
    <property type="term" value="C:fungal-type vacuole membrane"/>
    <property type="evidence" value="ECO:0000314"/>
    <property type="project" value="SGD"/>
</dbReference>
<dbReference type="GO" id="GO:0005739">
    <property type="term" value="C:mitochondrion"/>
    <property type="evidence" value="ECO:0007005"/>
    <property type="project" value="SGD"/>
</dbReference>
<dbReference type="GO" id="GO:0070772">
    <property type="term" value="C:PAS complex"/>
    <property type="evidence" value="ECO:0000314"/>
    <property type="project" value="SGD"/>
</dbReference>
<dbReference type="GO" id="GO:0000285">
    <property type="term" value="F:1-phosphatidylinositol-3-phosphate 5-kinase activity"/>
    <property type="evidence" value="ECO:0000314"/>
    <property type="project" value="SGD"/>
</dbReference>
<dbReference type="GO" id="GO:0005524">
    <property type="term" value="F:ATP binding"/>
    <property type="evidence" value="ECO:0007669"/>
    <property type="project" value="UniProtKB-KW"/>
</dbReference>
<dbReference type="GO" id="GO:0032266">
    <property type="term" value="F:phosphatidylinositol-3-phosphate binding"/>
    <property type="evidence" value="ECO:0000314"/>
    <property type="project" value="SGD"/>
</dbReference>
<dbReference type="GO" id="GO:0008270">
    <property type="term" value="F:zinc ion binding"/>
    <property type="evidence" value="ECO:0007669"/>
    <property type="project" value="UniProtKB-KW"/>
</dbReference>
<dbReference type="GO" id="GO:1903100">
    <property type="term" value="P:1-phosphatidyl-1D-myo-inositol 3,5-bisphosphate metabolic process"/>
    <property type="evidence" value="ECO:0000303"/>
    <property type="project" value="ComplexPortal"/>
</dbReference>
<dbReference type="GO" id="GO:0046854">
    <property type="term" value="P:phosphatidylinositol phosphate biosynthetic process"/>
    <property type="evidence" value="ECO:0000314"/>
    <property type="project" value="SGD"/>
</dbReference>
<dbReference type="GO" id="GO:0010511">
    <property type="term" value="P:regulation of phosphatidylinositol biosynthetic process"/>
    <property type="evidence" value="ECO:0000303"/>
    <property type="project" value="ComplexPortal"/>
</dbReference>
<dbReference type="GO" id="GO:0007033">
    <property type="term" value="P:vacuole organization"/>
    <property type="evidence" value="ECO:0000318"/>
    <property type="project" value="GO_Central"/>
</dbReference>
<dbReference type="CDD" id="cd03334">
    <property type="entry name" value="Fab1_TCP"/>
    <property type="match status" value="1"/>
</dbReference>
<dbReference type="CDD" id="cd17300">
    <property type="entry name" value="PIPKc_PIKfyve"/>
    <property type="match status" value="1"/>
</dbReference>
<dbReference type="FunFam" id="3.30.810.10:FF:000001">
    <property type="entry name" value="1-phosphatidylinositol 3-phosphate 5-kinase FAB1"/>
    <property type="match status" value="1"/>
</dbReference>
<dbReference type="FunFam" id="3.50.7.10:FF:000007">
    <property type="entry name" value="1-phosphatidylinositol 3-phosphate 5-kinase isoform X1"/>
    <property type="match status" value="1"/>
</dbReference>
<dbReference type="FunFam" id="3.30.40.10:FF:000283">
    <property type="entry name" value="1-phosphatidylinositol-3-phosphate 5-kinase (Fab1)"/>
    <property type="match status" value="1"/>
</dbReference>
<dbReference type="FunFam" id="3.30.800.10:FF:000005">
    <property type="entry name" value="1-phosphatidylinositol-3-phosphate 5-kinase (Fab1)"/>
    <property type="match status" value="1"/>
</dbReference>
<dbReference type="Gene3D" id="3.30.810.10">
    <property type="entry name" value="2-Layer Sandwich"/>
    <property type="match status" value="1"/>
</dbReference>
<dbReference type="Gene3D" id="3.50.7.10">
    <property type="entry name" value="GroEL"/>
    <property type="match status" value="1"/>
</dbReference>
<dbReference type="Gene3D" id="3.30.800.10">
    <property type="entry name" value="Phosphatidylinositol Phosphate Kinase II Beta"/>
    <property type="match status" value="1"/>
</dbReference>
<dbReference type="Gene3D" id="3.30.40.10">
    <property type="entry name" value="Zinc/RING finger domain, C3HC4 (zinc finger)"/>
    <property type="match status" value="1"/>
</dbReference>
<dbReference type="InterPro" id="IPR002423">
    <property type="entry name" value="Cpn60/GroEL/TCP-1"/>
</dbReference>
<dbReference type="InterPro" id="IPR027409">
    <property type="entry name" value="GroEL-like_apical_dom_sf"/>
</dbReference>
<dbReference type="InterPro" id="IPR044769">
    <property type="entry name" value="PIKfyve_PIPKc"/>
</dbReference>
<dbReference type="InterPro" id="IPR027483">
    <property type="entry name" value="PInositol-4-P-4/5-kinase_C_sf"/>
</dbReference>
<dbReference type="InterPro" id="IPR002498">
    <property type="entry name" value="PInositol-4-P-4/5-kinase_core"/>
</dbReference>
<dbReference type="InterPro" id="IPR027484">
    <property type="entry name" value="PInositol-4-P-5-kinase_N"/>
</dbReference>
<dbReference type="InterPro" id="IPR000306">
    <property type="entry name" value="Znf_FYVE"/>
</dbReference>
<dbReference type="InterPro" id="IPR017455">
    <property type="entry name" value="Znf_FYVE-rel"/>
</dbReference>
<dbReference type="InterPro" id="IPR011011">
    <property type="entry name" value="Znf_FYVE_PHD"/>
</dbReference>
<dbReference type="InterPro" id="IPR013083">
    <property type="entry name" value="Znf_RING/FYVE/PHD"/>
</dbReference>
<dbReference type="PANTHER" id="PTHR45748">
    <property type="entry name" value="1-PHOSPHATIDYLINOSITOL 3-PHOSPHATE 5-KINASE-RELATED"/>
    <property type="match status" value="1"/>
</dbReference>
<dbReference type="PANTHER" id="PTHR45748:SF7">
    <property type="entry name" value="1-PHOSPHATIDYLINOSITOL 3-PHOSPHATE 5-KINASE-RELATED"/>
    <property type="match status" value="1"/>
</dbReference>
<dbReference type="Pfam" id="PF00118">
    <property type="entry name" value="Cpn60_TCP1"/>
    <property type="match status" value="1"/>
</dbReference>
<dbReference type="Pfam" id="PF01363">
    <property type="entry name" value="FYVE"/>
    <property type="match status" value="1"/>
</dbReference>
<dbReference type="Pfam" id="PF01504">
    <property type="entry name" value="PIP5K"/>
    <property type="match status" value="2"/>
</dbReference>
<dbReference type="SMART" id="SM00064">
    <property type="entry name" value="FYVE"/>
    <property type="match status" value="1"/>
</dbReference>
<dbReference type="SMART" id="SM00330">
    <property type="entry name" value="PIPKc"/>
    <property type="match status" value="1"/>
</dbReference>
<dbReference type="SUPFAM" id="SSF57903">
    <property type="entry name" value="FYVE/PHD zinc finger"/>
    <property type="match status" value="1"/>
</dbReference>
<dbReference type="SUPFAM" id="SSF52029">
    <property type="entry name" value="GroEL apical domain-like"/>
    <property type="match status" value="1"/>
</dbReference>
<dbReference type="SUPFAM" id="SSF56104">
    <property type="entry name" value="SAICAR synthase-like"/>
    <property type="match status" value="1"/>
</dbReference>
<dbReference type="PROSITE" id="PS51455">
    <property type="entry name" value="PIPK"/>
    <property type="match status" value="1"/>
</dbReference>
<dbReference type="PROSITE" id="PS50178">
    <property type="entry name" value="ZF_FYVE"/>
    <property type="match status" value="1"/>
</dbReference>
<accession>P34756</accession>
<accession>D6VTQ0</accession>
<protein>
    <recommendedName>
        <fullName evidence="17">1-phosphatidylinositol 3-phosphate 5-kinase FAB1</fullName>
        <shortName>Phosphatidylinositol 3-phosphate 5-kinase</shortName>
        <ecNumber>2.7.1.150</ecNumber>
    </recommendedName>
    <alternativeName>
        <fullName evidence="15">Formation of aploid and binucleate cells protein 1</fullName>
    </alternativeName>
    <alternativeName>
        <fullName evidence="16">Styryl dye vacuolar localization protein 7</fullName>
    </alternativeName>
    <alternativeName>
        <fullName>Type III PIP kinase</fullName>
        <shortName>PIPkin-III</shortName>
    </alternativeName>
</protein>